<proteinExistence type="evidence at protein level"/>
<gene>
    <name evidence="5" type="primary">UBXN10</name>
    <name evidence="5" type="synonym">UBXD3</name>
</gene>
<name>UBX10_HUMAN</name>
<accession>Q96LJ8</accession>
<accession>Q5R386</accession>
<sequence>MATEAPVNIAPPECSTVVSTAVDSLIWQPNSLNMHMIRPKSAKGRTRPSLQKSQGVEVCAHHIPSPPPAIPYELPSSQKPGACAPKSPNQGASDEIPELQQQVPTGASSSLNKYPVLPSINRKNLEEEAVETVAKKASSLQLSSIRALYQDETGTMKTSEEDSRARACAVERKFIVRTKKQGSSRAGNLEEPSDQEPRLLLAVRSPTGQRFVRHFRPTDDLQTIVAVAEQKNKTSYRHCSIETMEVPRRRFSDLTKSLQECRIPHKSVLGISLEDGEGWP</sequence>
<dbReference type="EMBL" id="AK058158">
    <property type="protein sequence ID" value="BAB71693.1"/>
    <property type="molecule type" value="mRNA"/>
</dbReference>
<dbReference type="EMBL" id="Z98257">
    <property type="status" value="NOT_ANNOTATED_CDS"/>
    <property type="molecule type" value="Genomic_DNA"/>
</dbReference>
<dbReference type="EMBL" id="CH471134">
    <property type="protein sequence ID" value="EAW94920.1"/>
    <property type="molecule type" value="Genomic_DNA"/>
</dbReference>
<dbReference type="EMBL" id="BC047428">
    <property type="protein sequence ID" value="AAH47428.1"/>
    <property type="molecule type" value="mRNA"/>
</dbReference>
<dbReference type="CCDS" id="CCDS205.1"/>
<dbReference type="RefSeq" id="NP_689589.1">
    <property type="nucleotide sequence ID" value="NM_152376.5"/>
</dbReference>
<dbReference type="RefSeq" id="XP_005245799.1">
    <property type="nucleotide sequence ID" value="XM_005245742.5"/>
</dbReference>
<dbReference type="RefSeq" id="XP_011539001.1">
    <property type="nucleotide sequence ID" value="XM_011540699.4"/>
</dbReference>
<dbReference type="RefSeq" id="XP_054190370.1">
    <property type="nucleotide sequence ID" value="XM_054334395.1"/>
</dbReference>
<dbReference type="RefSeq" id="XP_054190371.1">
    <property type="nucleotide sequence ID" value="XM_054334396.1"/>
</dbReference>
<dbReference type="SMR" id="Q96LJ8"/>
<dbReference type="BioGRID" id="126082">
    <property type="interactions" value="41"/>
</dbReference>
<dbReference type="FunCoup" id="Q96LJ8">
    <property type="interactions" value="169"/>
</dbReference>
<dbReference type="IntAct" id="Q96LJ8">
    <property type="interactions" value="7"/>
</dbReference>
<dbReference type="MINT" id="Q96LJ8"/>
<dbReference type="STRING" id="9606.ENSP00000364240"/>
<dbReference type="iPTMnet" id="Q96LJ8"/>
<dbReference type="PhosphoSitePlus" id="Q96LJ8"/>
<dbReference type="BioMuta" id="UBXN10"/>
<dbReference type="DMDM" id="55976757"/>
<dbReference type="MassIVE" id="Q96LJ8"/>
<dbReference type="PaxDb" id="9606-ENSP00000364240"/>
<dbReference type="PeptideAtlas" id="Q96LJ8"/>
<dbReference type="ProteomicsDB" id="77215"/>
<dbReference type="Pumba" id="Q96LJ8"/>
<dbReference type="Antibodypedia" id="29784">
    <property type="antibodies" value="177 antibodies from 21 providers"/>
</dbReference>
<dbReference type="DNASU" id="127733"/>
<dbReference type="Ensembl" id="ENST00000375099.4">
    <property type="protein sequence ID" value="ENSP00000364240.3"/>
    <property type="gene ID" value="ENSG00000162543.6"/>
</dbReference>
<dbReference type="GeneID" id="127733"/>
<dbReference type="KEGG" id="hsa:127733"/>
<dbReference type="MANE-Select" id="ENST00000375099.4">
    <property type="protein sequence ID" value="ENSP00000364240.3"/>
    <property type="RefSeq nucleotide sequence ID" value="NM_152376.5"/>
    <property type="RefSeq protein sequence ID" value="NP_689589.1"/>
</dbReference>
<dbReference type="UCSC" id="uc001bdb.4">
    <property type="organism name" value="human"/>
</dbReference>
<dbReference type="AGR" id="HGNC:26354"/>
<dbReference type="CTD" id="127733"/>
<dbReference type="DisGeNET" id="127733"/>
<dbReference type="GeneCards" id="UBXN10"/>
<dbReference type="HGNC" id="HGNC:26354">
    <property type="gene designation" value="UBXN10"/>
</dbReference>
<dbReference type="HPA" id="ENSG00000162543">
    <property type="expression patterns" value="Tissue enhanced (choroid plexus, fallopian tube)"/>
</dbReference>
<dbReference type="neXtProt" id="NX_Q96LJ8"/>
<dbReference type="OpenTargets" id="ENSG00000162543"/>
<dbReference type="PharmGKB" id="PA162408337"/>
<dbReference type="VEuPathDB" id="HostDB:ENSG00000162543"/>
<dbReference type="eggNOG" id="ENOG502S4IN">
    <property type="taxonomic scope" value="Eukaryota"/>
</dbReference>
<dbReference type="GeneTree" id="ENSGT00390000012939"/>
<dbReference type="HOGENOM" id="CLU_079919_0_0_1"/>
<dbReference type="InParanoid" id="Q96LJ8"/>
<dbReference type="OMA" id="ADSFIWQ"/>
<dbReference type="OrthoDB" id="436606at2759"/>
<dbReference type="PAN-GO" id="Q96LJ8">
    <property type="GO annotations" value="3 GO annotations based on evolutionary models"/>
</dbReference>
<dbReference type="PhylomeDB" id="Q96LJ8"/>
<dbReference type="TreeFam" id="TF335927"/>
<dbReference type="PathwayCommons" id="Q96LJ8"/>
<dbReference type="SignaLink" id="Q96LJ8"/>
<dbReference type="BioGRID-ORCS" id="127733">
    <property type="hits" value="9 hits in 1147 CRISPR screens"/>
</dbReference>
<dbReference type="ChiTaRS" id="UBXN10">
    <property type="organism name" value="human"/>
</dbReference>
<dbReference type="GenomeRNAi" id="127733"/>
<dbReference type="Pharos" id="Q96LJ8">
    <property type="development level" value="Tdark"/>
</dbReference>
<dbReference type="PRO" id="PR:Q96LJ8"/>
<dbReference type="Proteomes" id="UP000005640">
    <property type="component" value="Chromosome 1"/>
</dbReference>
<dbReference type="RNAct" id="Q96LJ8">
    <property type="molecule type" value="protein"/>
</dbReference>
<dbReference type="Bgee" id="ENSG00000162543">
    <property type="expression patterns" value="Expressed in bronchial epithelial cell and 157 other cell types or tissues"/>
</dbReference>
<dbReference type="GO" id="GO:0005929">
    <property type="term" value="C:cilium"/>
    <property type="evidence" value="ECO:0000314"/>
    <property type="project" value="UniProtKB"/>
</dbReference>
<dbReference type="GO" id="GO:0005783">
    <property type="term" value="C:endoplasmic reticulum"/>
    <property type="evidence" value="ECO:0000318"/>
    <property type="project" value="GO_Central"/>
</dbReference>
<dbReference type="GO" id="GO:0043130">
    <property type="term" value="F:ubiquitin binding"/>
    <property type="evidence" value="ECO:0000318"/>
    <property type="project" value="GO_Central"/>
</dbReference>
<dbReference type="GO" id="GO:0060271">
    <property type="term" value="P:cilium assembly"/>
    <property type="evidence" value="ECO:0000314"/>
    <property type="project" value="UniProtKB"/>
</dbReference>
<dbReference type="GO" id="GO:0036503">
    <property type="term" value="P:ERAD pathway"/>
    <property type="evidence" value="ECO:0000318"/>
    <property type="project" value="GO_Central"/>
</dbReference>
<dbReference type="CDD" id="cd17076">
    <property type="entry name" value="UBX_UBXN10"/>
    <property type="match status" value="1"/>
</dbReference>
<dbReference type="FunFam" id="3.10.20.90:FF:000529">
    <property type="entry name" value="UBX domain-containing protein 10"/>
    <property type="match status" value="1"/>
</dbReference>
<dbReference type="Gene3D" id="3.10.20.90">
    <property type="entry name" value="Phosphatidylinositol 3-kinase Catalytic Subunit, Chain A, domain 1"/>
    <property type="match status" value="1"/>
</dbReference>
<dbReference type="InterPro" id="IPR029071">
    <property type="entry name" value="Ubiquitin-like_domsf"/>
</dbReference>
<dbReference type="InterPro" id="IPR001012">
    <property type="entry name" value="UBX_dom"/>
</dbReference>
<dbReference type="Pfam" id="PF00789">
    <property type="entry name" value="UBX"/>
    <property type="match status" value="1"/>
</dbReference>
<dbReference type="SMART" id="SM00166">
    <property type="entry name" value="UBX"/>
    <property type="match status" value="1"/>
</dbReference>
<dbReference type="SUPFAM" id="SSF54236">
    <property type="entry name" value="Ubiquitin-like"/>
    <property type="match status" value="1"/>
</dbReference>
<dbReference type="PROSITE" id="PS50033">
    <property type="entry name" value="UBX"/>
    <property type="match status" value="1"/>
</dbReference>
<protein>
    <recommendedName>
        <fullName evidence="4">UBX domain-containing protein 10</fullName>
    </recommendedName>
    <alternativeName>
        <fullName>UBX domain-containing protein 3</fullName>
    </alternativeName>
</protein>
<evidence type="ECO:0000255" key="1">
    <source>
        <dbReference type="PROSITE-ProRule" id="PRU00215"/>
    </source>
</evidence>
<evidence type="ECO:0000256" key="2">
    <source>
        <dbReference type="SAM" id="MobiDB-lite"/>
    </source>
</evidence>
<evidence type="ECO:0000269" key="3">
    <source>
    </source>
</evidence>
<evidence type="ECO:0000305" key="4"/>
<evidence type="ECO:0000312" key="5">
    <source>
        <dbReference type="HGNC" id="HGNC:26354"/>
    </source>
</evidence>
<evidence type="ECO:0007744" key="6">
    <source>
    </source>
</evidence>
<comment type="function">
    <text evidence="3">VCP/p97-binding protein required for ciliogenesis (PubMed:26389662). Acts as a tethering factor that facilitates recruitment of VCP/p97 to the intraflagellar transport complex B (IFT-B) in cilia (PubMed:26389662). UBX domain-containing proteins act as tethering factors for VCP/p97 and may specify substrate specificity of VCP/p97 (PubMed:26389662).</text>
</comment>
<comment type="subunit">
    <text evidence="3">Interacts with CLUAP1; the interaction is direct and mediates interaction with the intraflagellar transport complex B (IFT-B) (PubMed:26389662). Interacts with VCP; the interaction is direct (PubMed:26389662).</text>
</comment>
<comment type="interaction">
    <interactant intactId="EBI-1993941">
        <id>Q96LJ8</id>
    </interactant>
    <interactant intactId="EBI-1993899">
        <id>Q9BZV1</id>
        <label>UBXN6</label>
    </interactant>
    <organismsDiffer>false</organismsDiffer>
    <experiments>3</experiments>
</comment>
<comment type="interaction">
    <interactant intactId="EBI-1993941">
        <id>Q96LJ8</id>
    </interactant>
    <interactant intactId="EBI-355164">
        <id>P55072</id>
        <label>VCP</label>
    </interactant>
    <organismsDiffer>false</organismsDiffer>
    <experiments>7</experiments>
</comment>
<comment type="subcellular location">
    <subcellularLocation>
        <location evidence="3">Cell projection</location>
        <location evidence="3">Cilium</location>
    </subcellularLocation>
    <text evidence="3">Recruited to cilia in a VCP-dependent manner.</text>
</comment>
<comment type="similarity">
    <text evidence="4">Belongs to the UBXN10 family.</text>
</comment>
<keyword id="KW-0966">Cell projection</keyword>
<keyword id="KW-0969">Cilium</keyword>
<keyword id="KW-0970">Cilium biogenesis/degradation</keyword>
<keyword id="KW-0597">Phosphoprotein</keyword>
<keyword id="KW-1267">Proteomics identification</keyword>
<keyword id="KW-1185">Reference proteome</keyword>
<feature type="chain" id="PRO_0000211029" description="UBX domain-containing protein 10">
    <location>
        <begin position="1"/>
        <end position="280"/>
    </location>
</feature>
<feature type="domain" description="UBX" evidence="1">
    <location>
        <begin position="194"/>
        <end position="271"/>
    </location>
</feature>
<feature type="region of interest" description="Disordered" evidence="2">
    <location>
        <begin position="41"/>
        <end position="94"/>
    </location>
</feature>
<feature type="modified residue" description="Phosphoserine" evidence="6">
    <location>
        <position position="87"/>
    </location>
</feature>
<feature type="mutagenesis site" description="Reduced interaction with VCP." evidence="3">
    <original>M</original>
    <variation>A</variation>
    <location>
        <position position="244"/>
    </location>
</feature>
<feature type="mutagenesis site" description="Reduced interaction with VCP." evidence="3">
    <original>E</original>
    <variation>A</variation>
    <location>
        <position position="245"/>
    </location>
</feature>
<feature type="mutagenesis site" description="Reduced interaction with VCP." evidence="3">
    <original>V</original>
    <variation>A</variation>
    <location>
        <position position="246"/>
    </location>
</feature>
<feature type="mutagenesis site" description="Reduced interaction with VCP." evidence="3">
    <original>P</original>
    <variation>A</variation>
    <location>
        <position position="247"/>
    </location>
</feature>
<feature type="mutagenesis site" description="Reduced interaction with VCP." evidence="3">
    <original>R</original>
    <variation>A</variation>
    <location>
        <position position="248"/>
    </location>
</feature>
<organism>
    <name type="scientific">Homo sapiens</name>
    <name type="common">Human</name>
    <dbReference type="NCBI Taxonomy" id="9606"/>
    <lineage>
        <taxon>Eukaryota</taxon>
        <taxon>Metazoa</taxon>
        <taxon>Chordata</taxon>
        <taxon>Craniata</taxon>
        <taxon>Vertebrata</taxon>
        <taxon>Euteleostomi</taxon>
        <taxon>Mammalia</taxon>
        <taxon>Eutheria</taxon>
        <taxon>Euarchontoglires</taxon>
        <taxon>Primates</taxon>
        <taxon>Haplorrhini</taxon>
        <taxon>Catarrhini</taxon>
        <taxon>Hominidae</taxon>
        <taxon>Homo</taxon>
    </lineage>
</organism>
<reference key="1">
    <citation type="journal article" date="2004" name="Nat. Genet.">
        <title>Complete sequencing and characterization of 21,243 full-length human cDNAs.</title>
        <authorList>
            <person name="Ota T."/>
            <person name="Suzuki Y."/>
            <person name="Nishikawa T."/>
            <person name="Otsuki T."/>
            <person name="Sugiyama T."/>
            <person name="Irie R."/>
            <person name="Wakamatsu A."/>
            <person name="Hayashi K."/>
            <person name="Sato H."/>
            <person name="Nagai K."/>
            <person name="Kimura K."/>
            <person name="Makita H."/>
            <person name="Sekine M."/>
            <person name="Obayashi M."/>
            <person name="Nishi T."/>
            <person name="Shibahara T."/>
            <person name="Tanaka T."/>
            <person name="Ishii S."/>
            <person name="Yamamoto J."/>
            <person name="Saito K."/>
            <person name="Kawai Y."/>
            <person name="Isono Y."/>
            <person name="Nakamura Y."/>
            <person name="Nagahari K."/>
            <person name="Murakami K."/>
            <person name="Yasuda T."/>
            <person name="Iwayanagi T."/>
            <person name="Wagatsuma M."/>
            <person name="Shiratori A."/>
            <person name="Sudo H."/>
            <person name="Hosoiri T."/>
            <person name="Kaku Y."/>
            <person name="Kodaira H."/>
            <person name="Kondo H."/>
            <person name="Sugawara M."/>
            <person name="Takahashi M."/>
            <person name="Kanda K."/>
            <person name="Yokoi T."/>
            <person name="Furuya T."/>
            <person name="Kikkawa E."/>
            <person name="Omura Y."/>
            <person name="Abe K."/>
            <person name="Kamihara K."/>
            <person name="Katsuta N."/>
            <person name="Sato K."/>
            <person name="Tanikawa M."/>
            <person name="Yamazaki M."/>
            <person name="Ninomiya K."/>
            <person name="Ishibashi T."/>
            <person name="Yamashita H."/>
            <person name="Murakawa K."/>
            <person name="Fujimori K."/>
            <person name="Tanai H."/>
            <person name="Kimata M."/>
            <person name="Watanabe M."/>
            <person name="Hiraoka S."/>
            <person name="Chiba Y."/>
            <person name="Ishida S."/>
            <person name="Ono Y."/>
            <person name="Takiguchi S."/>
            <person name="Watanabe S."/>
            <person name="Yosida M."/>
            <person name="Hotuta T."/>
            <person name="Kusano J."/>
            <person name="Kanehori K."/>
            <person name="Takahashi-Fujii A."/>
            <person name="Hara H."/>
            <person name="Tanase T.-O."/>
            <person name="Nomura Y."/>
            <person name="Togiya S."/>
            <person name="Komai F."/>
            <person name="Hara R."/>
            <person name="Takeuchi K."/>
            <person name="Arita M."/>
            <person name="Imose N."/>
            <person name="Musashino K."/>
            <person name="Yuuki H."/>
            <person name="Oshima A."/>
            <person name="Sasaki N."/>
            <person name="Aotsuka S."/>
            <person name="Yoshikawa Y."/>
            <person name="Matsunawa H."/>
            <person name="Ichihara T."/>
            <person name="Shiohata N."/>
            <person name="Sano S."/>
            <person name="Moriya S."/>
            <person name="Momiyama H."/>
            <person name="Satoh N."/>
            <person name="Takami S."/>
            <person name="Terashima Y."/>
            <person name="Suzuki O."/>
            <person name="Nakagawa S."/>
            <person name="Senoh A."/>
            <person name="Mizoguchi H."/>
            <person name="Goto Y."/>
            <person name="Shimizu F."/>
            <person name="Wakebe H."/>
            <person name="Hishigaki H."/>
            <person name="Watanabe T."/>
            <person name="Sugiyama A."/>
            <person name="Takemoto M."/>
            <person name="Kawakami B."/>
            <person name="Yamazaki M."/>
            <person name="Watanabe K."/>
            <person name="Kumagai A."/>
            <person name="Itakura S."/>
            <person name="Fukuzumi Y."/>
            <person name="Fujimori Y."/>
            <person name="Komiyama M."/>
            <person name="Tashiro H."/>
            <person name="Tanigami A."/>
            <person name="Fujiwara T."/>
            <person name="Ono T."/>
            <person name="Yamada K."/>
            <person name="Fujii Y."/>
            <person name="Ozaki K."/>
            <person name="Hirao M."/>
            <person name="Ohmori Y."/>
            <person name="Kawabata A."/>
            <person name="Hikiji T."/>
            <person name="Kobatake N."/>
            <person name="Inagaki H."/>
            <person name="Ikema Y."/>
            <person name="Okamoto S."/>
            <person name="Okitani R."/>
            <person name="Kawakami T."/>
            <person name="Noguchi S."/>
            <person name="Itoh T."/>
            <person name="Shigeta K."/>
            <person name="Senba T."/>
            <person name="Matsumura K."/>
            <person name="Nakajima Y."/>
            <person name="Mizuno T."/>
            <person name="Morinaga M."/>
            <person name="Sasaki M."/>
            <person name="Togashi T."/>
            <person name="Oyama M."/>
            <person name="Hata H."/>
            <person name="Watanabe M."/>
            <person name="Komatsu T."/>
            <person name="Mizushima-Sugano J."/>
            <person name="Satoh T."/>
            <person name="Shirai Y."/>
            <person name="Takahashi Y."/>
            <person name="Nakagawa K."/>
            <person name="Okumura K."/>
            <person name="Nagase T."/>
            <person name="Nomura N."/>
            <person name="Kikuchi H."/>
            <person name="Masuho Y."/>
            <person name="Yamashita R."/>
            <person name="Nakai K."/>
            <person name="Yada T."/>
            <person name="Nakamura Y."/>
            <person name="Ohara O."/>
            <person name="Isogai T."/>
            <person name="Sugano S."/>
        </authorList>
    </citation>
    <scope>NUCLEOTIDE SEQUENCE [LARGE SCALE MRNA]</scope>
    <source>
        <tissue>Testis</tissue>
    </source>
</reference>
<reference key="2">
    <citation type="journal article" date="2006" name="Nature">
        <title>The DNA sequence and biological annotation of human chromosome 1.</title>
        <authorList>
            <person name="Gregory S.G."/>
            <person name="Barlow K.F."/>
            <person name="McLay K.E."/>
            <person name="Kaul R."/>
            <person name="Swarbreck D."/>
            <person name="Dunham A."/>
            <person name="Scott C.E."/>
            <person name="Howe K.L."/>
            <person name="Woodfine K."/>
            <person name="Spencer C.C.A."/>
            <person name="Jones M.C."/>
            <person name="Gillson C."/>
            <person name="Searle S."/>
            <person name="Zhou Y."/>
            <person name="Kokocinski F."/>
            <person name="McDonald L."/>
            <person name="Evans R."/>
            <person name="Phillips K."/>
            <person name="Atkinson A."/>
            <person name="Cooper R."/>
            <person name="Jones C."/>
            <person name="Hall R.E."/>
            <person name="Andrews T.D."/>
            <person name="Lloyd C."/>
            <person name="Ainscough R."/>
            <person name="Almeida J.P."/>
            <person name="Ambrose K.D."/>
            <person name="Anderson F."/>
            <person name="Andrew R.W."/>
            <person name="Ashwell R.I.S."/>
            <person name="Aubin K."/>
            <person name="Babbage A.K."/>
            <person name="Bagguley C.L."/>
            <person name="Bailey J."/>
            <person name="Beasley H."/>
            <person name="Bethel G."/>
            <person name="Bird C.P."/>
            <person name="Bray-Allen S."/>
            <person name="Brown J.Y."/>
            <person name="Brown A.J."/>
            <person name="Buckley D."/>
            <person name="Burton J."/>
            <person name="Bye J."/>
            <person name="Carder C."/>
            <person name="Chapman J.C."/>
            <person name="Clark S.Y."/>
            <person name="Clarke G."/>
            <person name="Clee C."/>
            <person name="Cobley V."/>
            <person name="Collier R.E."/>
            <person name="Corby N."/>
            <person name="Coville G.J."/>
            <person name="Davies J."/>
            <person name="Deadman R."/>
            <person name="Dunn M."/>
            <person name="Earthrowl M."/>
            <person name="Ellington A.G."/>
            <person name="Errington H."/>
            <person name="Frankish A."/>
            <person name="Frankland J."/>
            <person name="French L."/>
            <person name="Garner P."/>
            <person name="Garnett J."/>
            <person name="Gay L."/>
            <person name="Ghori M.R.J."/>
            <person name="Gibson R."/>
            <person name="Gilby L.M."/>
            <person name="Gillett W."/>
            <person name="Glithero R.J."/>
            <person name="Grafham D.V."/>
            <person name="Griffiths C."/>
            <person name="Griffiths-Jones S."/>
            <person name="Grocock R."/>
            <person name="Hammond S."/>
            <person name="Harrison E.S.I."/>
            <person name="Hart E."/>
            <person name="Haugen E."/>
            <person name="Heath P.D."/>
            <person name="Holmes S."/>
            <person name="Holt K."/>
            <person name="Howden P.J."/>
            <person name="Hunt A.R."/>
            <person name="Hunt S.E."/>
            <person name="Hunter G."/>
            <person name="Isherwood J."/>
            <person name="James R."/>
            <person name="Johnson C."/>
            <person name="Johnson D."/>
            <person name="Joy A."/>
            <person name="Kay M."/>
            <person name="Kershaw J.K."/>
            <person name="Kibukawa M."/>
            <person name="Kimberley A.M."/>
            <person name="King A."/>
            <person name="Knights A.J."/>
            <person name="Lad H."/>
            <person name="Laird G."/>
            <person name="Lawlor S."/>
            <person name="Leongamornlert D.A."/>
            <person name="Lloyd D.M."/>
            <person name="Loveland J."/>
            <person name="Lovell J."/>
            <person name="Lush M.J."/>
            <person name="Lyne R."/>
            <person name="Martin S."/>
            <person name="Mashreghi-Mohammadi M."/>
            <person name="Matthews L."/>
            <person name="Matthews N.S.W."/>
            <person name="McLaren S."/>
            <person name="Milne S."/>
            <person name="Mistry S."/>
            <person name="Moore M.J.F."/>
            <person name="Nickerson T."/>
            <person name="O'Dell C.N."/>
            <person name="Oliver K."/>
            <person name="Palmeiri A."/>
            <person name="Palmer S.A."/>
            <person name="Parker A."/>
            <person name="Patel D."/>
            <person name="Pearce A.V."/>
            <person name="Peck A.I."/>
            <person name="Pelan S."/>
            <person name="Phelps K."/>
            <person name="Phillimore B.J."/>
            <person name="Plumb R."/>
            <person name="Rajan J."/>
            <person name="Raymond C."/>
            <person name="Rouse G."/>
            <person name="Saenphimmachak C."/>
            <person name="Sehra H.K."/>
            <person name="Sheridan E."/>
            <person name="Shownkeen R."/>
            <person name="Sims S."/>
            <person name="Skuce C.D."/>
            <person name="Smith M."/>
            <person name="Steward C."/>
            <person name="Subramanian S."/>
            <person name="Sycamore N."/>
            <person name="Tracey A."/>
            <person name="Tromans A."/>
            <person name="Van Helmond Z."/>
            <person name="Wall M."/>
            <person name="Wallis J.M."/>
            <person name="White S."/>
            <person name="Whitehead S.L."/>
            <person name="Wilkinson J.E."/>
            <person name="Willey D.L."/>
            <person name="Williams H."/>
            <person name="Wilming L."/>
            <person name="Wray P.W."/>
            <person name="Wu Z."/>
            <person name="Coulson A."/>
            <person name="Vaudin M."/>
            <person name="Sulston J.E."/>
            <person name="Durbin R.M."/>
            <person name="Hubbard T."/>
            <person name="Wooster R."/>
            <person name="Dunham I."/>
            <person name="Carter N.P."/>
            <person name="McVean G."/>
            <person name="Ross M.T."/>
            <person name="Harrow J."/>
            <person name="Olson M.V."/>
            <person name="Beck S."/>
            <person name="Rogers J."/>
            <person name="Bentley D.R."/>
        </authorList>
    </citation>
    <scope>NUCLEOTIDE SEQUENCE [LARGE SCALE GENOMIC DNA]</scope>
</reference>
<reference key="3">
    <citation type="submission" date="2005-07" db="EMBL/GenBank/DDBJ databases">
        <authorList>
            <person name="Mural R.J."/>
            <person name="Istrail S."/>
            <person name="Sutton G.G."/>
            <person name="Florea L."/>
            <person name="Halpern A.L."/>
            <person name="Mobarry C.M."/>
            <person name="Lippert R."/>
            <person name="Walenz B."/>
            <person name="Shatkay H."/>
            <person name="Dew I."/>
            <person name="Miller J.R."/>
            <person name="Flanigan M.J."/>
            <person name="Edwards N.J."/>
            <person name="Bolanos R."/>
            <person name="Fasulo D."/>
            <person name="Halldorsson B.V."/>
            <person name="Hannenhalli S."/>
            <person name="Turner R."/>
            <person name="Yooseph S."/>
            <person name="Lu F."/>
            <person name="Nusskern D.R."/>
            <person name="Shue B.C."/>
            <person name="Zheng X.H."/>
            <person name="Zhong F."/>
            <person name="Delcher A.L."/>
            <person name="Huson D.H."/>
            <person name="Kravitz S.A."/>
            <person name="Mouchard L."/>
            <person name="Reinert K."/>
            <person name="Remington K.A."/>
            <person name="Clark A.G."/>
            <person name="Waterman M.S."/>
            <person name="Eichler E.E."/>
            <person name="Adams M.D."/>
            <person name="Hunkapiller M.W."/>
            <person name="Myers E.W."/>
            <person name="Venter J.C."/>
        </authorList>
    </citation>
    <scope>NUCLEOTIDE SEQUENCE [LARGE SCALE GENOMIC DNA]</scope>
</reference>
<reference key="4">
    <citation type="journal article" date="2004" name="Genome Res.">
        <title>The status, quality, and expansion of the NIH full-length cDNA project: the Mammalian Gene Collection (MGC).</title>
        <authorList>
            <consortium name="The MGC Project Team"/>
        </authorList>
    </citation>
    <scope>NUCLEOTIDE SEQUENCE [LARGE SCALE MRNA]</scope>
    <source>
        <tissue>Testis</tissue>
    </source>
</reference>
<reference key="5">
    <citation type="journal article" date="2013" name="J. Proteome Res.">
        <title>Toward a comprehensive characterization of a human cancer cell phosphoproteome.</title>
        <authorList>
            <person name="Zhou H."/>
            <person name="Di Palma S."/>
            <person name="Preisinger C."/>
            <person name="Peng M."/>
            <person name="Polat A.N."/>
            <person name="Heck A.J."/>
            <person name="Mohammed S."/>
        </authorList>
    </citation>
    <scope>PHOSPHORYLATION [LARGE SCALE ANALYSIS] AT SER-87</scope>
    <scope>IDENTIFICATION BY MASS SPECTROMETRY [LARGE SCALE ANALYSIS]</scope>
    <source>
        <tissue>Erythroleukemia</tissue>
    </source>
</reference>
<reference key="6">
    <citation type="journal article" date="2015" name="Nat. Cell Biol.">
        <title>Systematic proteomics of the VCP-UBXD adaptor network identifies a role for UBXN10 in regulating ciliogenesis.</title>
        <authorList>
            <person name="Raman M."/>
            <person name="Sergeev M."/>
            <person name="Garnaas M."/>
            <person name="Lydeard J.R."/>
            <person name="Huttlin E.L."/>
            <person name="Goessling W."/>
            <person name="Shah J.V."/>
            <person name="Harper J.W."/>
        </authorList>
    </citation>
    <scope>FUNCTION</scope>
    <scope>SUBCELLULAR LOCATION</scope>
    <scope>INTERACTION WITH CLUAP1 AND VCP</scope>
    <scope>MUTAGENESIS OF MET-244; GLU-245; VAL-246; PRO-247 AND ARG-248</scope>
</reference>